<evidence type="ECO:0000250" key="1">
    <source>
        <dbReference type="UniProtKB" id="Q8K0B2"/>
    </source>
</evidence>
<evidence type="ECO:0000255" key="2"/>
<evidence type="ECO:0000269" key="3">
    <source>
    </source>
</evidence>
<evidence type="ECO:0000269" key="4">
    <source>
    </source>
</evidence>
<evidence type="ECO:0000269" key="5">
    <source>
    </source>
</evidence>
<evidence type="ECO:0000269" key="6">
    <source>
    </source>
</evidence>
<evidence type="ECO:0000269" key="7">
    <source>
    </source>
</evidence>
<evidence type="ECO:0000269" key="8">
    <source>
    </source>
</evidence>
<evidence type="ECO:0000269" key="9">
    <source>
    </source>
</evidence>
<evidence type="ECO:0000303" key="10">
    <source>
    </source>
</evidence>
<evidence type="ECO:0000303" key="11">
    <source>
    </source>
</evidence>
<evidence type="ECO:0000303" key="12">
    <source>
    </source>
</evidence>
<evidence type="ECO:0000303" key="13">
    <source>
    </source>
</evidence>
<evidence type="ECO:0000303" key="14">
    <source>
    </source>
</evidence>
<evidence type="ECO:0000303" key="15">
    <source>
    </source>
</evidence>
<evidence type="ECO:0000303" key="16">
    <source>
    </source>
</evidence>
<evidence type="ECO:0000303" key="17">
    <source ref="2"/>
</evidence>
<evidence type="ECO:0000305" key="18"/>
<evidence type="ECO:0000305" key="19">
    <source>
    </source>
</evidence>
<evidence type="ECO:0000312" key="20">
    <source>
        <dbReference type="HGNC" id="HGNC:23038"/>
    </source>
</evidence>
<evidence type="ECO:0007744" key="21">
    <source>
    </source>
</evidence>
<evidence type="ECO:0007744" key="22">
    <source>
    </source>
</evidence>
<organism>
    <name type="scientific">Homo sapiens</name>
    <name type="common">Human</name>
    <dbReference type="NCBI Taxonomy" id="9606"/>
    <lineage>
        <taxon>Eukaryota</taxon>
        <taxon>Metazoa</taxon>
        <taxon>Chordata</taxon>
        <taxon>Craniata</taxon>
        <taxon>Vertebrata</taxon>
        <taxon>Euteleostomi</taxon>
        <taxon>Mammalia</taxon>
        <taxon>Eutheria</taxon>
        <taxon>Euarchontoglires</taxon>
        <taxon>Primates</taxon>
        <taxon>Haplorrhini</taxon>
        <taxon>Catarrhini</taxon>
        <taxon>Hominidae</taxon>
        <taxon>Homo</taxon>
    </lineage>
</organism>
<accession>Q9NUN5</accession>
<accession>A8K204</accession>
<accession>E1P531</accession>
<accession>Q5VUN6</accession>
<accession>Q86Y70</accession>
<accession>Q96FW4</accession>
<accession>Q9BY56</accession>
<accession>Q9NZD6</accession>
<feature type="chain" id="PRO_0000260515" description="Lysosomal cobalamin transport escort protein LMBD1">
    <location>
        <begin position="1"/>
        <end position="540"/>
    </location>
</feature>
<feature type="topological domain" description="Extracellular" evidence="2">
    <location>
        <begin position="1"/>
        <end position="10"/>
    </location>
</feature>
<feature type="transmembrane region" description="Helical; Name=1" evidence="2">
    <location>
        <begin position="11"/>
        <end position="31"/>
    </location>
</feature>
<feature type="topological domain" description="Cytoplasmic" evidence="2">
    <location>
        <begin position="32"/>
        <end position="50"/>
    </location>
</feature>
<feature type="transmembrane region" description="Helical; Name=2" evidence="2">
    <location>
        <begin position="51"/>
        <end position="71"/>
    </location>
</feature>
<feature type="topological domain" description="Extracellular" evidence="2">
    <location>
        <begin position="72"/>
        <end position="100"/>
    </location>
</feature>
<feature type="transmembrane region" description="Helical; Name=3" evidence="2">
    <location>
        <begin position="101"/>
        <end position="121"/>
    </location>
</feature>
<feature type="topological domain" description="Cytoplasmic" evidence="2">
    <location>
        <begin position="122"/>
        <end position="144"/>
    </location>
</feature>
<feature type="transmembrane region" description="Helical; Name=4" evidence="2">
    <location>
        <begin position="145"/>
        <end position="165"/>
    </location>
</feature>
<feature type="topological domain" description="Extracellular" evidence="2">
    <location>
        <begin position="166"/>
        <end position="188"/>
    </location>
</feature>
<feature type="transmembrane region" description="Helical; Name=5" evidence="2">
    <location>
        <begin position="189"/>
        <end position="209"/>
    </location>
</feature>
<feature type="topological domain" description="Cytoplasmic" evidence="2">
    <location>
        <begin position="210"/>
        <end position="305"/>
    </location>
</feature>
<feature type="transmembrane region" description="Helical; Name=6" evidence="2">
    <location>
        <begin position="306"/>
        <end position="326"/>
    </location>
</feature>
<feature type="topological domain" description="Extracellular" evidence="2">
    <location>
        <begin position="327"/>
        <end position="364"/>
    </location>
</feature>
<feature type="transmembrane region" description="Helical; Name=7" evidence="2">
    <location>
        <begin position="365"/>
        <end position="385"/>
    </location>
</feature>
<feature type="topological domain" description="Cytoplasmic" evidence="2">
    <location>
        <begin position="386"/>
        <end position="408"/>
    </location>
</feature>
<feature type="transmembrane region" description="Helical; Name=8" evidence="2">
    <location>
        <begin position="409"/>
        <end position="429"/>
    </location>
</feature>
<feature type="topological domain" description="Extracellular" evidence="2">
    <location>
        <begin position="430"/>
        <end position="486"/>
    </location>
</feature>
<feature type="transmembrane region" description="Helical; Name=9" evidence="2">
    <location>
        <begin position="487"/>
        <end position="507"/>
    </location>
</feature>
<feature type="topological domain" description="Cytoplasmic" evidence="2">
    <location>
        <begin position="508"/>
        <end position="540"/>
    </location>
</feature>
<feature type="short sequence motif" description="YERL motif; mediates interaction with adapter protein complex 2 and is essential for its function in clathrin-mediated endocytosis of INSR" evidence="1">
    <location>
        <begin position="232"/>
        <end position="235"/>
    </location>
</feature>
<feature type="short sequence motif" description="WTKF motif; mediates interaction with adapter protein complex 2 and is essential for its function in clathrin-mediated endocytosis of INSR" evidence="1">
    <location>
        <begin position="294"/>
        <end position="297"/>
    </location>
</feature>
<feature type="modified residue" description="Phosphothreonine" evidence="1">
    <location>
        <position position="238"/>
    </location>
</feature>
<feature type="modified residue" description="Phosphoserine" evidence="21 22">
    <location>
        <position position="528"/>
    </location>
</feature>
<feature type="modified residue" description="Phosphoserine" evidence="21 22">
    <location>
        <position position="531"/>
    </location>
</feature>
<feature type="glycosylation site" description="N-linked (GlcNAc...) asparagine" evidence="2">
    <location>
        <position position="78"/>
    </location>
</feature>
<feature type="glycosylation site" description="N-linked (GlcNAc...) asparagine" evidence="2">
    <location>
        <position position="88"/>
    </location>
</feature>
<feature type="glycosylation site" description="N-linked (GlcNAc...) asparagine" evidence="2">
    <location>
        <position position="170"/>
    </location>
</feature>
<feature type="glycosylation site" description="N-linked (GlcNAc...) asparagine" evidence="2">
    <location>
        <position position="347"/>
    </location>
</feature>
<feature type="glycosylation site" description="N-linked (GlcNAc...) asparagine" evidence="2">
    <location>
        <position position="448"/>
    </location>
</feature>
<feature type="glycosylation site" description="N-linked (GlcNAc...) asparagine" evidence="19">
    <location>
        <position position="457"/>
    </location>
</feature>
<feature type="splice variant" id="VSP_036539" description="In isoform 4." evidence="12">
    <location>
        <begin position="1"/>
        <end position="204"/>
    </location>
</feature>
<feature type="splice variant" id="VSP_021629" description="In isoform 3." evidence="10 11 13 17">
    <location>
        <begin position="1"/>
        <end position="73"/>
    </location>
</feature>
<feature type="splice variant" id="VSP_021630" description="In isoform 2 and isoform 4." evidence="12">
    <original>VFPLDYILITIIIMYFIFTSMAGIRNIGIWF</original>
    <variation>EFEILAYGSFGLDYIKSEEVEPGPKHSFFSA</variation>
    <location>
        <begin position="362"/>
        <end position="392"/>
    </location>
</feature>
<feature type="splice variant" id="VSP_036540" description="In isoform 2 and isoform 4." evidence="12">
    <location>
        <begin position="393"/>
        <end position="540"/>
    </location>
</feature>
<feature type="sequence variant" id="VAR_029047" description="In dbSNP:rs12214456.">
    <original>T</original>
    <variation>A</variation>
    <location>
        <position position="144"/>
    </location>
</feature>
<feature type="sequence variant" id="VAR_029048" description="In dbSNP:rs17854411." evidence="3">
    <original>I</original>
    <variation>V</variation>
    <location>
        <position position="395"/>
    </location>
</feature>
<feature type="sequence variant" id="VAR_029049" description="In dbSNP:rs12648.">
    <original>D</original>
    <variation>E</variation>
    <location>
        <position position="469"/>
    </location>
</feature>
<feature type="mutagenesis site" description="Does not affect glycosylation status; when associated with Q-88." evidence="5">
    <original>N</original>
    <variation>Q</variation>
    <location>
        <position position="78"/>
    </location>
</feature>
<feature type="mutagenesis site" description="Does not affect glycosylation status; when associated with Q-78." evidence="5">
    <original>N</original>
    <variation>Q</variation>
    <location>
        <position position="88"/>
    </location>
</feature>
<feature type="mutagenesis site" description="Affects glycosylation status; when associated with Q-457." evidence="5">
    <original>N</original>
    <variation>Q</variation>
    <location>
        <position position="448"/>
    </location>
</feature>
<feature type="mutagenesis site" description="Affects glycosylation status. Affects glycosylation status; when associated with Q-448." evidence="5">
    <original>N</original>
    <variation>Q</variation>
    <location>
        <position position="457"/>
    </location>
</feature>
<proteinExistence type="evidence at protein level"/>
<gene>
    <name evidence="20" type="primary">LMBRD1</name>
    <name type="synonym">C6orf209</name>
    <name type="synonym">NESI</name>
    <name type="ORF">BM-021</name>
    <name type="ORF">CD001</name>
    <name type="ORF">MSTP044</name>
</gene>
<sequence length="540" mass="61389">MATSGAASAELVIGWCIFGLLLLAILAFCWIYVRKYQSRRESEVVSTITAIFSLAIALITSALLPVDIFLVSYMKNQNGTFKDWANANVSRQIEDTVLYGYYTLYSVILFCVFFWIPFVYFYYEEKDDDDTSKCTQIKTALKYTLGFVVICALLLLVGAFVPLNVPNNKNSTEWEKVKSLFEELGSSHGLAALSFSISSLTLIGMLAAITYTAYGMSALPLNLIKGTRSAAYERLENTEDIEEVEQHIQTIKSKSKDGRPLPARDKRALKQFEERLRTLKKRERHLEFIENSWWTKFCGALRPLKIVWGIFFILVALLFVISLFLSNLDKALHSAGIDSGFIIFGANLSNPLNMLLPLLQTVFPLDYILITIIIMYFIFTSMAGIRNIGIWFFWIRLYKIRRGRTRPQALLFLCMILLLIVLHTSYMIYSLAPQYVMYGSQNYLIETNITSDNHKGNSTLSVPKRCDADAPEDQCTVTRTYLFLHKFWFFSAAYYFGNWAFLGVFLIGLIVSCCKGKKSVIEGVDEDSDISDDEPSVYSA</sequence>
<comment type="function">
    <text evidence="1 5 7 15">Lysosomal membrane chaperone required to export cobalamin (vitamin B12) from the lysosome to the cytosol, allowing its conversion to cofactors (PubMed:19136951). Targets ABCD4 transporter from the endoplasmic reticulum to the lysosome (PubMed:27456980). Then forms a complex with lysosomal ABCD4 and cytoplasmic MMACHC to transport cobalamin across the lysosomal membrane (PubMed:25535791). Acts as an adapter protein which plays an important role in mediating and regulating the internalization of the insulin receptor (INSR) (By similarity). Involved in clathrin-mediated endocytosis of INSR via its interaction with adapter protein complex 2 (By similarity). Essential for the initiation of gastrulation and early formation of mesoderm structures during embryogenesis (By similarity).</text>
</comment>
<comment type="function">
    <molecule>Isoform 3</molecule>
    <text evidence="4">(Microbial infection) May play a role in the assembly of hepatitis delta virus (HDV).</text>
</comment>
<comment type="subunit">
    <molecule>Isoform 3</molecule>
    <text evidence="4">(Microbial infection) Interacts with hepatitis delta virus NES (HDAg-L).</text>
</comment>
<comment type="subunit">
    <text evidence="1 6 7 8 9">Interacts with ABCD4; this interaction induces the translocation of ABCD4 from the endoplasmic reticulum to the lysosome (PubMed:27456980, PubMed:28572511, PubMed:33845046). Interacts with ABCD4 and MMACHC; this interaction ensures the transport of cobalamin from the lysosome to the cytoplasm (PubMed:25535791). Interacts with INSR, adapter protein complex 2 and clathrin heavy chain (By similarity).</text>
</comment>
<comment type="interaction">
    <interactant intactId="EBI-2805231">
        <id>Q9NUN5</id>
    </interactant>
    <interactant intactId="EBI-714396">
        <id>O14678</id>
        <label>ABCD4</label>
    </interactant>
    <organismsDiffer>false</organismsDiffer>
    <experiments>7</experiments>
</comment>
<comment type="interaction">
    <interactant intactId="EBI-17721490">
        <id>Q9NUN5-4</id>
    </interactant>
    <interactant intactId="EBI-17721485">
        <id>Q8WWU5-7</id>
        <label>TCP11</label>
    </interactant>
    <organismsDiffer>false</organismsDiffer>
    <experiments>3</experiments>
</comment>
<comment type="subcellular location">
    <subcellularLocation>
        <location evidence="7">Endoplasmic reticulum membrane</location>
    </subcellularLocation>
    <subcellularLocation>
        <location evidence="5 7 8 9">Lysosome membrane</location>
        <topology evidence="2">Multi-pass membrane protein</topology>
    </subcellularLocation>
    <subcellularLocation>
        <location evidence="1">Cell membrane</location>
        <topology evidence="2">Multi-pass membrane protein</topology>
    </subcellularLocation>
    <subcellularLocation>
        <location evidence="1">Cytoplasmic vesicle</location>
        <location evidence="1">Clathrin-coated vesicle</location>
    </subcellularLocation>
</comment>
<comment type="alternative products">
    <event type="alternative splicing"/>
    <isoform>
        <id>Q9NUN5-1</id>
        <name>1</name>
        <sequence type="displayed"/>
    </isoform>
    <isoform>
        <id>Q9NUN5-2</id>
        <name>2</name>
        <sequence type="described" ref="VSP_021630 VSP_036540"/>
    </isoform>
    <isoform>
        <id>Q9NUN5-3</id>
        <name>3</name>
        <name>NESI</name>
        <sequence type="described" ref="VSP_021629"/>
    </isoform>
    <isoform>
        <id>Q9NUN5-4</id>
        <name>4</name>
        <sequence type="described" ref="VSP_036539 VSP_021630 VSP_036540"/>
    </isoform>
</comment>
<comment type="tissue specificity">
    <text evidence="4">Isoform 3 is expressed in liver.</text>
</comment>
<comment type="PTM">
    <text evidence="5">N-glycosylated.</text>
</comment>
<comment type="disease" evidence="5">
    <disease id="DI-00746">
        <name>Methylmalonic aciduria and homocystinuria, cblF type</name>
        <acronym>MAHCF</acronym>
        <description>An autosomal recessive disorder of cobalamin metabolism characterized by decreased levels of the coenzymes adenosylcobalamin (AdoCbl) and methylcobalamin (MeCbl). It is due to accumulation of free cobalamin in lysosomes, thus hindering its conversion to cofactors. Clinical features include developmental delay, stomatitis, glossitis, seizures and methylmalonic aciduria responsive to vitamin B12.</description>
        <dbReference type="MIM" id="277380"/>
    </disease>
    <text>The disease is caused by variants affecting the gene represented in this entry.</text>
</comment>
<comment type="similarity">
    <text evidence="18">Belongs to the LIMR family. LMBRD1 subfamily.</text>
</comment>
<comment type="sequence caution" evidence="18">
    <conflict type="frameshift">
        <sequence resource="EMBL-CDS" id="AAK26247"/>
    </conflict>
</comment>
<dbReference type="EMBL" id="AY136817">
    <property type="protein sequence ID" value="AAN11301.1"/>
    <property type="molecule type" value="mRNA"/>
</dbReference>
<dbReference type="EMBL" id="AF113224">
    <property type="protein sequence ID" value="AAG39295.1"/>
    <property type="molecule type" value="mRNA"/>
</dbReference>
<dbReference type="EMBL" id="AF208863">
    <property type="protein sequence ID" value="AAF64277.1"/>
    <property type="molecule type" value="mRNA"/>
</dbReference>
<dbReference type="EMBL" id="AK002102">
    <property type="protein sequence ID" value="BAA92087.1"/>
    <property type="molecule type" value="mRNA"/>
</dbReference>
<dbReference type="EMBL" id="AK290069">
    <property type="protein sequence ID" value="BAF82758.1"/>
    <property type="molecule type" value="mRNA"/>
</dbReference>
<dbReference type="EMBL" id="AL358133">
    <property type="status" value="NOT_ANNOTATED_CDS"/>
    <property type="molecule type" value="Genomic_DNA"/>
</dbReference>
<dbReference type="EMBL" id="AL583831">
    <property type="status" value="NOT_ANNOTATED_CDS"/>
    <property type="molecule type" value="Genomic_DNA"/>
</dbReference>
<dbReference type="EMBL" id="AL590702">
    <property type="status" value="NOT_ANNOTATED_CDS"/>
    <property type="molecule type" value="Genomic_DNA"/>
</dbReference>
<dbReference type="EMBL" id="CH471051">
    <property type="protein sequence ID" value="EAW48832.1"/>
    <property type="molecule type" value="Genomic_DNA"/>
</dbReference>
<dbReference type="EMBL" id="CH471051">
    <property type="protein sequence ID" value="EAW48833.1"/>
    <property type="molecule type" value="Genomic_DNA"/>
</dbReference>
<dbReference type="EMBL" id="CH471051">
    <property type="protein sequence ID" value="EAW48835.1"/>
    <property type="molecule type" value="Genomic_DNA"/>
</dbReference>
<dbReference type="EMBL" id="BC010360">
    <property type="protein sequence ID" value="AAH10360.1"/>
    <property type="molecule type" value="mRNA"/>
</dbReference>
<dbReference type="EMBL" id="BC047073">
    <property type="protein sequence ID" value="AAH47073.1"/>
    <property type="molecule type" value="mRNA"/>
</dbReference>
<dbReference type="EMBL" id="AF211480">
    <property type="protein sequence ID" value="AAK26247.1"/>
    <property type="status" value="ALT_FRAME"/>
    <property type="molecule type" value="mRNA"/>
</dbReference>
<dbReference type="CCDS" id="CCDS4969.1">
    <molecule id="Q9NUN5-1"/>
</dbReference>
<dbReference type="CCDS" id="CCDS87415.1">
    <molecule id="Q9NUN5-3"/>
</dbReference>
<dbReference type="RefSeq" id="NP_001350651.1">
    <molecule id="Q9NUN5-3"/>
    <property type="nucleotide sequence ID" value="NM_001363722.2"/>
</dbReference>
<dbReference type="RefSeq" id="NP_001354200.1">
    <molecule id="Q9NUN5-3"/>
    <property type="nucleotide sequence ID" value="NM_001367271.1"/>
</dbReference>
<dbReference type="RefSeq" id="NP_001354201.1">
    <molecule id="Q9NUN5-3"/>
    <property type="nucleotide sequence ID" value="NM_001367272.1"/>
</dbReference>
<dbReference type="RefSeq" id="NP_060838.3">
    <molecule id="Q9NUN5-1"/>
    <property type="nucleotide sequence ID" value="NM_018368.3"/>
</dbReference>
<dbReference type="RefSeq" id="XP_011534243.1">
    <property type="nucleotide sequence ID" value="XM_011535941.1"/>
</dbReference>
<dbReference type="SMR" id="Q9NUN5"/>
<dbReference type="BioGRID" id="120902">
    <property type="interactions" value="8"/>
</dbReference>
<dbReference type="CORUM" id="Q9NUN5"/>
<dbReference type="FunCoup" id="Q9NUN5">
    <property type="interactions" value="1390"/>
</dbReference>
<dbReference type="IntAct" id="Q9NUN5">
    <property type="interactions" value="9"/>
</dbReference>
<dbReference type="STRING" id="9606.ENSP00000497690"/>
<dbReference type="TCDB" id="9.A.54.1.1">
    <property type="family name" value="the lysosomal cobalamin (b12) transporter (l-b12t) family"/>
</dbReference>
<dbReference type="GlyConnect" id="1628">
    <property type="glycosylation" value="11 N-Linked glycans (1 site)"/>
</dbReference>
<dbReference type="GlyCosmos" id="Q9NUN5">
    <property type="glycosylation" value="6 sites, 11 glycans"/>
</dbReference>
<dbReference type="GlyGen" id="Q9NUN5">
    <property type="glycosylation" value="7 sites, 36 N-linked glycans (3 sites)"/>
</dbReference>
<dbReference type="iPTMnet" id="Q9NUN5"/>
<dbReference type="PhosphoSitePlus" id="Q9NUN5"/>
<dbReference type="SwissPalm" id="Q9NUN5"/>
<dbReference type="BioMuta" id="LMBRD1"/>
<dbReference type="DMDM" id="74752981"/>
<dbReference type="jPOST" id="Q9NUN5"/>
<dbReference type="MassIVE" id="Q9NUN5"/>
<dbReference type="PaxDb" id="9606-ENSP00000359609"/>
<dbReference type="PeptideAtlas" id="Q9NUN5"/>
<dbReference type="ProteomicsDB" id="82696">
    <molecule id="Q9NUN5-1"/>
</dbReference>
<dbReference type="ProteomicsDB" id="82697">
    <molecule id="Q9NUN5-2"/>
</dbReference>
<dbReference type="ProteomicsDB" id="82698">
    <molecule id="Q9NUN5-3"/>
</dbReference>
<dbReference type="ProteomicsDB" id="82699">
    <molecule id="Q9NUN5-4"/>
</dbReference>
<dbReference type="Pumba" id="Q9NUN5"/>
<dbReference type="Antibodypedia" id="17627">
    <property type="antibodies" value="84 antibodies from 25 providers"/>
</dbReference>
<dbReference type="DNASU" id="55788"/>
<dbReference type="Ensembl" id="ENST00000370570.6">
    <molecule id="Q9NUN5-3"/>
    <property type="protein sequence ID" value="ENSP00000359602.1"/>
    <property type="gene ID" value="ENSG00000168216.13"/>
</dbReference>
<dbReference type="Ensembl" id="ENST00000647964.1">
    <molecule id="Q9NUN5-3"/>
    <property type="protein sequence ID" value="ENSP00000496784.1"/>
    <property type="gene ID" value="ENSG00000168216.13"/>
</dbReference>
<dbReference type="Ensembl" id="ENST00000648168.1">
    <molecule id="Q9NUN5-3"/>
    <property type="protein sequence ID" value="ENSP00000498178.1"/>
    <property type="gene ID" value="ENSG00000168216.13"/>
</dbReference>
<dbReference type="Ensembl" id="ENST00000648394.1">
    <molecule id="Q9NUN5-3"/>
    <property type="protein sequence ID" value="ENSP00000497302.1"/>
    <property type="gene ID" value="ENSG00000168216.13"/>
</dbReference>
<dbReference type="Ensembl" id="ENST00000648743.1">
    <molecule id="Q9NUN5-3"/>
    <property type="protein sequence ID" value="ENSP00000497135.1"/>
    <property type="gene ID" value="ENSG00000168216.13"/>
</dbReference>
<dbReference type="Ensembl" id="ENST00000649028.1">
    <molecule id="Q9NUN5-3"/>
    <property type="protein sequence ID" value="ENSP00000498034.1"/>
    <property type="gene ID" value="ENSG00000168216.13"/>
</dbReference>
<dbReference type="Ensembl" id="ENST00000649679.1">
    <molecule id="Q9NUN5-3"/>
    <property type="protein sequence ID" value="ENSP00000497387.1"/>
    <property type="gene ID" value="ENSG00000168216.13"/>
</dbReference>
<dbReference type="Ensembl" id="ENST00000649918.1">
    <molecule id="Q9NUN5-3"/>
    <property type="protein sequence ID" value="ENSP00000497487.1"/>
    <property type="gene ID" value="ENSG00000168216.13"/>
</dbReference>
<dbReference type="Ensembl" id="ENST00000649934.3">
    <molecule id="Q9NUN5-1"/>
    <property type="protein sequence ID" value="ENSP00000497690.1"/>
    <property type="gene ID" value="ENSG00000168216.13"/>
</dbReference>
<dbReference type="Ensembl" id="ENST00000650035.1">
    <molecule id="Q9NUN5-3"/>
    <property type="protein sequence ID" value="ENSP00000497703.1"/>
    <property type="gene ID" value="ENSG00000168216.13"/>
</dbReference>
<dbReference type="Ensembl" id="ENST00000650107.1">
    <molecule id="Q9NUN5-3"/>
    <property type="protein sequence ID" value="ENSP00000497124.1"/>
    <property type="gene ID" value="ENSG00000168216.13"/>
</dbReference>
<dbReference type="GeneID" id="55788"/>
<dbReference type="KEGG" id="hsa:55788"/>
<dbReference type="MANE-Select" id="ENST00000649934.3">
    <property type="protein sequence ID" value="ENSP00000497690.1"/>
    <property type="RefSeq nucleotide sequence ID" value="NM_018368.4"/>
    <property type="RefSeq protein sequence ID" value="NP_060838.3"/>
</dbReference>
<dbReference type="UCSC" id="uc003pez.4">
    <molecule id="Q9NUN5-1"/>
    <property type="organism name" value="human"/>
</dbReference>
<dbReference type="AGR" id="HGNC:23038"/>
<dbReference type="CTD" id="55788"/>
<dbReference type="DisGeNET" id="55788"/>
<dbReference type="GeneCards" id="LMBRD1"/>
<dbReference type="GeneReviews" id="LMBRD1"/>
<dbReference type="HGNC" id="HGNC:23038">
    <property type="gene designation" value="LMBRD1"/>
</dbReference>
<dbReference type="HPA" id="ENSG00000168216">
    <property type="expression patterns" value="Low tissue specificity"/>
</dbReference>
<dbReference type="MalaCards" id="LMBRD1"/>
<dbReference type="MIM" id="277380">
    <property type="type" value="phenotype"/>
</dbReference>
<dbReference type="MIM" id="612625">
    <property type="type" value="gene"/>
</dbReference>
<dbReference type="neXtProt" id="NX_Q9NUN5"/>
<dbReference type="OpenTargets" id="ENSG00000168216"/>
<dbReference type="Orphanet" id="79284">
    <property type="disease" value="Methylmalonic acidemia with homocystinuria type cblF"/>
</dbReference>
<dbReference type="PharmGKB" id="PA134948847"/>
<dbReference type="VEuPathDB" id="HostDB:ENSG00000168216"/>
<dbReference type="eggNOG" id="ENOG502QQ2T">
    <property type="taxonomic scope" value="Eukaryota"/>
</dbReference>
<dbReference type="GeneTree" id="ENSGT00390000002581"/>
<dbReference type="HOGENOM" id="CLU_028341_1_0_1"/>
<dbReference type="InParanoid" id="Q9NUN5"/>
<dbReference type="OrthoDB" id="73273at2759"/>
<dbReference type="PAN-GO" id="Q9NUN5">
    <property type="GO annotations" value="2 GO annotations based on evolutionary models"/>
</dbReference>
<dbReference type="PhylomeDB" id="Q9NUN5"/>
<dbReference type="TreeFam" id="TF329170"/>
<dbReference type="PathwayCommons" id="Q9NUN5"/>
<dbReference type="Reactome" id="R-HSA-5683329">
    <property type="pathway name" value="Defective ABCD4 causes MAHCJ"/>
</dbReference>
<dbReference type="Reactome" id="R-HSA-9758881">
    <property type="pathway name" value="Uptake of dietary cobalamins into enterocytes"/>
</dbReference>
<dbReference type="Reactome" id="R-HSA-9758890">
    <property type="pathway name" value="Transport of RCbl within the body"/>
</dbReference>
<dbReference type="SignaLink" id="Q9NUN5"/>
<dbReference type="BioGRID-ORCS" id="55788">
    <property type="hits" value="12 hits in 1161 CRISPR screens"/>
</dbReference>
<dbReference type="ChiTaRS" id="LMBRD1">
    <property type="organism name" value="human"/>
</dbReference>
<dbReference type="GeneWiki" id="LMBRD1"/>
<dbReference type="GenomeRNAi" id="55788"/>
<dbReference type="Pharos" id="Q9NUN5">
    <property type="development level" value="Tbio"/>
</dbReference>
<dbReference type="PRO" id="PR:Q9NUN5"/>
<dbReference type="Proteomes" id="UP000005640">
    <property type="component" value="Chromosome 6"/>
</dbReference>
<dbReference type="RNAct" id="Q9NUN5">
    <property type="molecule type" value="protein"/>
</dbReference>
<dbReference type="Bgee" id="ENSG00000168216">
    <property type="expression patterns" value="Expressed in secondary oocyte and 207 other cell types or tissues"/>
</dbReference>
<dbReference type="ExpressionAtlas" id="Q9NUN5">
    <property type="expression patterns" value="baseline and differential"/>
</dbReference>
<dbReference type="GO" id="GO:0045334">
    <property type="term" value="C:clathrin-coated endocytic vesicle"/>
    <property type="evidence" value="ECO:0000250"/>
    <property type="project" value="UniProtKB"/>
</dbReference>
<dbReference type="GO" id="GO:0030136">
    <property type="term" value="C:clathrin-coated vesicle"/>
    <property type="evidence" value="ECO:0000250"/>
    <property type="project" value="UniProtKB"/>
</dbReference>
<dbReference type="GO" id="GO:0005789">
    <property type="term" value="C:endoplasmic reticulum membrane"/>
    <property type="evidence" value="ECO:0000314"/>
    <property type="project" value="UniProtKB"/>
</dbReference>
<dbReference type="GO" id="GO:0043231">
    <property type="term" value="C:intracellular membrane-bounded organelle"/>
    <property type="evidence" value="ECO:0000314"/>
    <property type="project" value="HPA"/>
</dbReference>
<dbReference type="GO" id="GO:0005765">
    <property type="term" value="C:lysosomal membrane"/>
    <property type="evidence" value="ECO:0000314"/>
    <property type="project" value="UniProtKB"/>
</dbReference>
<dbReference type="GO" id="GO:0016020">
    <property type="term" value="C:membrane"/>
    <property type="evidence" value="ECO:0007005"/>
    <property type="project" value="UniProtKB"/>
</dbReference>
<dbReference type="GO" id="GO:0005886">
    <property type="term" value="C:plasma membrane"/>
    <property type="evidence" value="ECO:0000250"/>
    <property type="project" value="UniProtKB"/>
</dbReference>
<dbReference type="GO" id="GO:0035612">
    <property type="term" value="F:AP-2 adaptor complex binding"/>
    <property type="evidence" value="ECO:0000250"/>
    <property type="project" value="UniProtKB"/>
</dbReference>
<dbReference type="GO" id="GO:0032050">
    <property type="term" value="F:clathrin heavy chain binding"/>
    <property type="evidence" value="ECO:0000250"/>
    <property type="project" value="UniProtKB"/>
</dbReference>
<dbReference type="GO" id="GO:0031419">
    <property type="term" value="F:cobalamin binding"/>
    <property type="evidence" value="ECO:0007669"/>
    <property type="project" value="UniProtKB-KW"/>
</dbReference>
<dbReference type="GO" id="GO:0005158">
    <property type="term" value="F:insulin receptor binding"/>
    <property type="evidence" value="ECO:0007669"/>
    <property type="project" value="Ensembl"/>
</dbReference>
<dbReference type="GO" id="GO:0140318">
    <property type="term" value="F:protein transporter activity"/>
    <property type="evidence" value="ECO:0000314"/>
    <property type="project" value="MGI"/>
</dbReference>
<dbReference type="GO" id="GO:0072583">
    <property type="term" value="P:clathrin-dependent endocytosis"/>
    <property type="evidence" value="ECO:0000250"/>
    <property type="project" value="UniProtKB"/>
</dbReference>
<dbReference type="GO" id="GO:0007369">
    <property type="term" value="P:gastrulation"/>
    <property type="evidence" value="ECO:0000250"/>
    <property type="project" value="UniProtKB"/>
</dbReference>
<dbReference type="GO" id="GO:0038016">
    <property type="term" value="P:insulin receptor internalization"/>
    <property type="evidence" value="ECO:0000250"/>
    <property type="project" value="UniProtKB"/>
</dbReference>
<dbReference type="GO" id="GO:0061462">
    <property type="term" value="P:protein localization to lysosome"/>
    <property type="evidence" value="ECO:0000314"/>
    <property type="project" value="UniProtKB"/>
</dbReference>
<dbReference type="InterPro" id="IPR050854">
    <property type="entry name" value="LMBD1_LysCbl_Transport"/>
</dbReference>
<dbReference type="InterPro" id="IPR006876">
    <property type="entry name" value="LMBR1-like_membr_prot"/>
</dbReference>
<dbReference type="PANTHER" id="PTHR16130:SF2">
    <property type="entry name" value="LYSOSOMAL COBALAMIN TRANSPORT ESCORT PROTEIN LMBD1"/>
    <property type="match status" value="1"/>
</dbReference>
<dbReference type="PANTHER" id="PTHR16130">
    <property type="entry name" value="LYSOSOMAL COBALAMIN TRANSPORTER-RELATED"/>
    <property type="match status" value="1"/>
</dbReference>
<dbReference type="Pfam" id="PF04791">
    <property type="entry name" value="LMBR1"/>
    <property type="match status" value="1"/>
</dbReference>
<keyword id="KW-0025">Alternative splicing</keyword>
<keyword id="KW-1003">Cell membrane</keyword>
<keyword id="KW-0846">Cobalamin</keyword>
<keyword id="KW-0170">Cobalt</keyword>
<keyword id="KW-0968">Cytoplasmic vesicle</keyword>
<keyword id="KW-0217">Developmental protein</keyword>
<keyword id="KW-0254">Endocytosis</keyword>
<keyword id="KW-0256">Endoplasmic reticulum</keyword>
<keyword id="KW-0306">Gastrulation</keyword>
<keyword id="KW-0325">Glycoprotein</keyword>
<keyword id="KW-0945">Host-virus interaction</keyword>
<keyword id="KW-0458">Lysosome</keyword>
<keyword id="KW-0472">Membrane</keyword>
<keyword id="KW-0597">Phosphoprotein</keyword>
<keyword id="KW-1267">Proteomics identification</keyword>
<keyword id="KW-1185">Reference proteome</keyword>
<keyword id="KW-0812">Transmembrane</keyword>
<keyword id="KW-1133">Transmembrane helix</keyword>
<keyword id="KW-0813">Transport</keyword>
<protein>
    <recommendedName>
        <fullName evidence="16">Lysosomal cobalamin transport escort protein LMBD1</fullName>
        <shortName evidence="14">LMBD1</shortName>
    </recommendedName>
    <alternativeName>
        <fullName>HDAg-L-interacting protein NESI</fullName>
    </alternativeName>
    <alternativeName>
        <fullName>LMBR1 domain-containing protein 1</fullName>
    </alternativeName>
    <alternativeName>
        <fullName>Nuclear export signal-interacting protein</fullName>
    </alternativeName>
</protein>
<reference key="1">
    <citation type="journal article" date="2005" name="J. Virol.">
        <title>Novel nuclear export signal-interacting protein, NESI, critical for the assembly of hepatitis delta virus.</title>
        <authorList>
            <person name="Wang Y.-H."/>
            <person name="Chang S.C."/>
            <person name="Huang C."/>
            <person name="Li Y.-P."/>
            <person name="Lee C.-H."/>
            <person name="Chang M.-F."/>
        </authorList>
    </citation>
    <scope>NUCLEOTIDE SEQUENCE [MRNA] (ISOFORM 3)</scope>
    <scope>FUNCTION (MICROBIAL INFECTION)</scope>
    <scope>TISSUE SPECIFICITY</scope>
    <scope>INTERACTION WITH HEPATITIS DELTA VIRUS HDAG-L (MICROBIAL INFECTION)</scope>
</reference>
<reference key="2">
    <citation type="submission" date="1998-12" db="EMBL/GenBank/DDBJ databases">
        <authorList>
            <person name="Liu B."/>
            <person name="Liu Y.Q."/>
            <person name="Wang X.Y."/>
            <person name="Zhao B."/>
            <person name="Sheng H."/>
            <person name="Zhao X.W."/>
            <person name="Liu S."/>
            <person name="Xu Y.Y."/>
            <person name="Ye J."/>
            <person name="Song L."/>
            <person name="Gao Y."/>
            <person name="Zhang C.L."/>
            <person name="Zhang J."/>
            <person name="Wei Y.J."/>
            <person name="Cao H.Q."/>
            <person name="Zhao Y."/>
            <person name="Liu L.S."/>
            <person name="Ding J.F."/>
            <person name="Gao R.L."/>
            <person name="Wu Q.Y."/>
            <person name="Qiang B.Q."/>
            <person name="Yuan J.G."/>
            <person name="Liew C.C."/>
            <person name="Zhao M.S."/>
            <person name="Hui R.T."/>
        </authorList>
    </citation>
    <scope>NUCLEOTIDE SEQUENCE [MRNA] (ISOFORM 3)</scope>
    <source>
        <tissue>Heart</tissue>
    </source>
</reference>
<reference key="3">
    <citation type="journal article" date="2000" name="Genome Res.">
        <title>Cloning and functional analysis of cDNAs with open reading frames for 300 previously undefined genes expressed in CD34+ hematopoietic stem/progenitor cells.</title>
        <authorList>
            <person name="Zhang Q.-H."/>
            <person name="Ye M."/>
            <person name="Wu X.-Y."/>
            <person name="Ren S.-X."/>
            <person name="Zhao M."/>
            <person name="Zhao C.-J."/>
            <person name="Fu G."/>
            <person name="Shen Y."/>
            <person name="Fan H.-Y."/>
            <person name="Lu G."/>
            <person name="Zhong M."/>
            <person name="Xu X.-R."/>
            <person name="Han Z.-G."/>
            <person name="Zhang J.-W."/>
            <person name="Tao J."/>
            <person name="Huang Q.-H."/>
            <person name="Zhou J."/>
            <person name="Hu G.-X."/>
            <person name="Gu J."/>
            <person name="Chen S.-J."/>
            <person name="Chen Z."/>
        </authorList>
    </citation>
    <scope>NUCLEOTIDE SEQUENCE [LARGE SCALE MRNA] (ISOFORM 3)</scope>
    <source>
        <tissue>Bone marrow</tissue>
    </source>
</reference>
<reference key="4">
    <citation type="journal article" date="2004" name="Nat. Genet.">
        <title>Complete sequencing and characterization of 21,243 full-length human cDNAs.</title>
        <authorList>
            <person name="Ota T."/>
            <person name="Suzuki Y."/>
            <person name="Nishikawa T."/>
            <person name="Otsuki T."/>
            <person name="Sugiyama T."/>
            <person name="Irie R."/>
            <person name="Wakamatsu A."/>
            <person name="Hayashi K."/>
            <person name="Sato H."/>
            <person name="Nagai K."/>
            <person name="Kimura K."/>
            <person name="Makita H."/>
            <person name="Sekine M."/>
            <person name="Obayashi M."/>
            <person name="Nishi T."/>
            <person name="Shibahara T."/>
            <person name="Tanaka T."/>
            <person name="Ishii S."/>
            <person name="Yamamoto J."/>
            <person name="Saito K."/>
            <person name="Kawai Y."/>
            <person name="Isono Y."/>
            <person name="Nakamura Y."/>
            <person name="Nagahari K."/>
            <person name="Murakami K."/>
            <person name="Yasuda T."/>
            <person name="Iwayanagi T."/>
            <person name="Wagatsuma M."/>
            <person name="Shiratori A."/>
            <person name="Sudo H."/>
            <person name="Hosoiri T."/>
            <person name="Kaku Y."/>
            <person name="Kodaira H."/>
            <person name="Kondo H."/>
            <person name="Sugawara M."/>
            <person name="Takahashi M."/>
            <person name="Kanda K."/>
            <person name="Yokoi T."/>
            <person name="Furuya T."/>
            <person name="Kikkawa E."/>
            <person name="Omura Y."/>
            <person name="Abe K."/>
            <person name="Kamihara K."/>
            <person name="Katsuta N."/>
            <person name="Sato K."/>
            <person name="Tanikawa M."/>
            <person name="Yamazaki M."/>
            <person name="Ninomiya K."/>
            <person name="Ishibashi T."/>
            <person name="Yamashita H."/>
            <person name="Murakawa K."/>
            <person name="Fujimori K."/>
            <person name="Tanai H."/>
            <person name="Kimata M."/>
            <person name="Watanabe M."/>
            <person name="Hiraoka S."/>
            <person name="Chiba Y."/>
            <person name="Ishida S."/>
            <person name="Ono Y."/>
            <person name="Takiguchi S."/>
            <person name="Watanabe S."/>
            <person name="Yosida M."/>
            <person name="Hotuta T."/>
            <person name="Kusano J."/>
            <person name="Kanehori K."/>
            <person name="Takahashi-Fujii A."/>
            <person name="Hara H."/>
            <person name="Tanase T.-O."/>
            <person name="Nomura Y."/>
            <person name="Togiya S."/>
            <person name="Komai F."/>
            <person name="Hara R."/>
            <person name="Takeuchi K."/>
            <person name="Arita M."/>
            <person name="Imose N."/>
            <person name="Musashino K."/>
            <person name="Yuuki H."/>
            <person name="Oshima A."/>
            <person name="Sasaki N."/>
            <person name="Aotsuka S."/>
            <person name="Yoshikawa Y."/>
            <person name="Matsunawa H."/>
            <person name="Ichihara T."/>
            <person name="Shiohata N."/>
            <person name="Sano S."/>
            <person name="Moriya S."/>
            <person name="Momiyama H."/>
            <person name="Satoh N."/>
            <person name="Takami S."/>
            <person name="Terashima Y."/>
            <person name="Suzuki O."/>
            <person name="Nakagawa S."/>
            <person name="Senoh A."/>
            <person name="Mizoguchi H."/>
            <person name="Goto Y."/>
            <person name="Shimizu F."/>
            <person name="Wakebe H."/>
            <person name="Hishigaki H."/>
            <person name="Watanabe T."/>
            <person name="Sugiyama A."/>
            <person name="Takemoto M."/>
            <person name="Kawakami B."/>
            <person name="Yamazaki M."/>
            <person name="Watanabe K."/>
            <person name="Kumagai A."/>
            <person name="Itakura S."/>
            <person name="Fukuzumi Y."/>
            <person name="Fujimori Y."/>
            <person name="Komiyama M."/>
            <person name="Tashiro H."/>
            <person name="Tanigami A."/>
            <person name="Fujiwara T."/>
            <person name="Ono T."/>
            <person name="Yamada K."/>
            <person name="Fujii Y."/>
            <person name="Ozaki K."/>
            <person name="Hirao M."/>
            <person name="Ohmori Y."/>
            <person name="Kawabata A."/>
            <person name="Hikiji T."/>
            <person name="Kobatake N."/>
            <person name="Inagaki H."/>
            <person name="Ikema Y."/>
            <person name="Okamoto S."/>
            <person name="Okitani R."/>
            <person name="Kawakami T."/>
            <person name="Noguchi S."/>
            <person name="Itoh T."/>
            <person name="Shigeta K."/>
            <person name="Senba T."/>
            <person name="Matsumura K."/>
            <person name="Nakajima Y."/>
            <person name="Mizuno T."/>
            <person name="Morinaga M."/>
            <person name="Sasaki M."/>
            <person name="Togashi T."/>
            <person name="Oyama M."/>
            <person name="Hata H."/>
            <person name="Watanabe M."/>
            <person name="Komatsu T."/>
            <person name="Mizushima-Sugano J."/>
            <person name="Satoh T."/>
            <person name="Shirai Y."/>
            <person name="Takahashi Y."/>
            <person name="Nakagawa K."/>
            <person name="Okumura K."/>
            <person name="Nagase T."/>
            <person name="Nomura N."/>
            <person name="Kikuchi H."/>
            <person name="Masuho Y."/>
            <person name="Yamashita R."/>
            <person name="Nakai K."/>
            <person name="Yada T."/>
            <person name="Nakamura Y."/>
            <person name="Ohara O."/>
            <person name="Isogai T."/>
            <person name="Sugano S."/>
        </authorList>
    </citation>
    <scope>NUCLEOTIDE SEQUENCE [LARGE SCALE MRNA] (ISOFORMS 1 AND 3)</scope>
    <source>
        <tissue>Placenta</tissue>
        <tissue>Substantia nigra</tissue>
    </source>
</reference>
<reference key="5">
    <citation type="journal article" date="2003" name="Nature">
        <title>The DNA sequence and analysis of human chromosome 6.</title>
        <authorList>
            <person name="Mungall A.J."/>
            <person name="Palmer S.A."/>
            <person name="Sims S.K."/>
            <person name="Edwards C.A."/>
            <person name="Ashurst J.L."/>
            <person name="Wilming L."/>
            <person name="Jones M.C."/>
            <person name="Horton R."/>
            <person name="Hunt S.E."/>
            <person name="Scott C.E."/>
            <person name="Gilbert J.G.R."/>
            <person name="Clamp M.E."/>
            <person name="Bethel G."/>
            <person name="Milne S."/>
            <person name="Ainscough R."/>
            <person name="Almeida J.P."/>
            <person name="Ambrose K.D."/>
            <person name="Andrews T.D."/>
            <person name="Ashwell R.I.S."/>
            <person name="Babbage A.K."/>
            <person name="Bagguley C.L."/>
            <person name="Bailey J."/>
            <person name="Banerjee R."/>
            <person name="Barker D.J."/>
            <person name="Barlow K.F."/>
            <person name="Bates K."/>
            <person name="Beare D.M."/>
            <person name="Beasley H."/>
            <person name="Beasley O."/>
            <person name="Bird C.P."/>
            <person name="Blakey S.E."/>
            <person name="Bray-Allen S."/>
            <person name="Brook J."/>
            <person name="Brown A.J."/>
            <person name="Brown J.Y."/>
            <person name="Burford D.C."/>
            <person name="Burrill W."/>
            <person name="Burton J."/>
            <person name="Carder C."/>
            <person name="Carter N.P."/>
            <person name="Chapman J.C."/>
            <person name="Clark S.Y."/>
            <person name="Clark G."/>
            <person name="Clee C.M."/>
            <person name="Clegg S."/>
            <person name="Cobley V."/>
            <person name="Collier R.E."/>
            <person name="Collins J.E."/>
            <person name="Colman L.K."/>
            <person name="Corby N.R."/>
            <person name="Coville G.J."/>
            <person name="Culley K.M."/>
            <person name="Dhami P."/>
            <person name="Davies J."/>
            <person name="Dunn M."/>
            <person name="Earthrowl M.E."/>
            <person name="Ellington A.E."/>
            <person name="Evans K.A."/>
            <person name="Faulkner L."/>
            <person name="Francis M.D."/>
            <person name="Frankish A."/>
            <person name="Frankland J."/>
            <person name="French L."/>
            <person name="Garner P."/>
            <person name="Garnett J."/>
            <person name="Ghori M.J."/>
            <person name="Gilby L.M."/>
            <person name="Gillson C.J."/>
            <person name="Glithero R.J."/>
            <person name="Grafham D.V."/>
            <person name="Grant M."/>
            <person name="Gribble S."/>
            <person name="Griffiths C."/>
            <person name="Griffiths M.N.D."/>
            <person name="Hall R."/>
            <person name="Halls K.S."/>
            <person name="Hammond S."/>
            <person name="Harley J.L."/>
            <person name="Hart E.A."/>
            <person name="Heath P.D."/>
            <person name="Heathcott R."/>
            <person name="Holmes S.J."/>
            <person name="Howden P.J."/>
            <person name="Howe K.L."/>
            <person name="Howell G.R."/>
            <person name="Huckle E."/>
            <person name="Humphray S.J."/>
            <person name="Humphries M.D."/>
            <person name="Hunt A.R."/>
            <person name="Johnson C.M."/>
            <person name="Joy A.A."/>
            <person name="Kay M."/>
            <person name="Keenan S.J."/>
            <person name="Kimberley A.M."/>
            <person name="King A."/>
            <person name="Laird G.K."/>
            <person name="Langford C."/>
            <person name="Lawlor S."/>
            <person name="Leongamornlert D.A."/>
            <person name="Leversha M."/>
            <person name="Lloyd C.R."/>
            <person name="Lloyd D.M."/>
            <person name="Loveland J.E."/>
            <person name="Lovell J."/>
            <person name="Martin S."/>
            <person name="Mashreghi-Mohammadi M."/>
            <person name="Maslen G.L."/>
            <person name="Matthews L."/>
            <person name="McCann O.T."/>
            <person name="McLaren S.J."/>
            <person name="McLay K."/>
            <person name="McMurray A."/>
            <person name="Moore M.J.F."/>
            <person name="Mullikin J.C."/>
            <person name="Niblett D."/>
            <person name="Nickerson T."/>
            <person name="Novik K.L."/>
            <person name="Oliver K."/>
            <person name="Overton-Larty E.K."/>
            <person name="Parker A."/>
            <person name="Patel R."/>
            <person name="Pearce A.V."/>
            <person name="Peck A.I."/>
            <person name="Phillimore B.J.C.T."/>
            <person name="Phillips S."/>
            <person name="Plumb R.W."/>
            <person name="Porter K.M."/>
            <person name="Ramsey Y."/>
            <person name="Ranby S.A."/>
            <person name="Rice C.M."/>
            <person name="Ross M.T."/>
            <person name="Searle S.M."/>
            <person name="Sehra H.K."/>
            <person name="Sheridan E."/>
            <person name="Skuce C.D."/>
            <person name="Smith S."/>
            <person name="Smith M."/>
            <person name="Spraggon L."/>
            <person name="Squares S.L."/>
            <person name="Steward C.A."/>
            <person name="Sycamore N."/>
            <person name="Tamlyn-Hall G."/>
            <person name="Tester J."/>
            <person name="Theaker A.J."/>
            <person name="Thomas D.W."/>
            <person name="Thorpe A."/>
            <person name="Tracey A."/>
            <person name="Tromans A."/>
            <person name="Tubby B."/>
            <person name="Wall M."/>
            <person name="Wallis J.M."/>
            <person name="West A.P."/>
            <person name="White S.S."/>
            <person name="Whitehead S.L."/>
            <person name="Whittaker H."/>
            <person name="Wild A."/>
            <person name="Willey D.J."/>
            <person name="Wilmer T.E."/>
            <person name="Wood J.M."/>
            <person name="Wray P.W."/>
            <person name="Wyatt J.C."/>
            <person name="Young L."/>
            <person name="Younger R.M."/>
            <person name="Bentley D.R."/>
            <person name="Coulson A."/>
            <person name="Durbin R.M."/>
            <person name="Hubbard T."/>
            <person name="Sulston J.E."/>
            <person name="Dunham I."/>
            <person name="Rogers J."/>
            <person name="Beck S."/>
        </authorList>
    </citation>
    <scope>NUCLEOTIDE SEQUENCE [LARGE SCALE GENOMIC DNA]</scope>
</reference>
<reference key="6">
    <citation type="submission" date="2005-09" db="EMBL/GenBank/DDBJ databases">
        <authorList>
            <person name="Mural R.J."/>
            <person name="Istrail S."/>
            <person name="Sutton G.G."/>
            <person name="Florea L."/>
            <person name="Halpern A.L."/>
            <person name="Mobarry C.M."/>
            <person name="Lippert R."/>
            <person name="Walenz B."/>
            <person name="Shatkay H."/>
            <person name="Dew I."/>
            <person name="Miller J.R."/>
            <person name="Flanigan M.J."/>
            <person name="Edwards N.J."/>
            <person name="Bolanos R."/>
            <person name="Fasulo D."/>
            <person name="Halldorsson B.V."/>
            <person name="Hannenhalli S."/>
            <person name="Turner R."/>
            <person name="Yooseph S."/>
            <person name="Lu F."/>
            <person name="Nusskern D.R."/>
            <person name="Shue B.C."/>
            <person name="Zheng X.H."/>
            <person name="Zhong F."/>
            <person name="Delcher A.L."/>
            <person name="Huson D.H."/>
            <person name="Kravitz S.A."/>
            <person name="Mouchard L."/>
            <person name="Reinert K."/>
            <person name="Remington K.A."/>
            <person name="Clark A.G."/>
            <person name="Waterman M.S."/>
            <person name="Eichler E.E."/>
            <person name="Adams M.D."/>
            <person name="Hunkapiller M.W."/>
            <person name="Myers E.W."/>
            <person name="Venter J.C."/>
        </authorList>
    </citation>
    <scope>NUCLEOTIDE SEQUENCE [LARGE SCALE GENOMIC DNA]</scope>
</reference>
<reference key="7">
    <citation type="journal article" date="2004" name="Genome Res.">
        <title>The status, quality, and expansion of the NIH full-length cDNA project: the Mammalian Gene Collection (MGC).</title>
        <authorList>
            <consortium name="The MGC Project Team"/>
        </authorList>
    </citation>
    <scope>NUCLEOTIDE SEQUENCE [LARGE SCALE MRNA] (ISOFORMS 1 AND 4)</scope>
    <scope>VARIANT VAL-395</scope>
    <source>
        <tissue>Brain</tissue>
    </source>
</reference>
<reference key="8">
    <citation type="submission" date="1999-12" db="EMBL/GenBank/DDBJ databases">
        <title>A novel gene expressed in human pheochromocytoma.</title>
        <authorList>
            <person name="Li N."/>
            <person name="Song H."/>
            <person name="Peng Y."/>
            <person name="Xiao H."/>
            <person name="Han Z."/>
            <person name="Chen Z."/>
        </authorList>
    </citation>
    <scope>NUCLEOTIDE SEQUENCE [LARGE SCALE MRNA] OF 130-540 (ISOFORMS 1/3)</scope>
    <source>
        <tissue>Pheochromocytoma</tissue>
    </source>
</reference>
<reference key="9">
    <citation type="journal article" date="2008" name="Mol. Cell">
        <title>Kinase-selective enrichment enables quantitative phosphoproteomics of the kinome across the cell cycle.</title>
        <authorList>
            <person name="Daub H."/>
            <person name="Olsen J.V."/>
            <person name="Bairlein M."/>
            <person name="Gnad F."/>
            <person name="Oppermann F.S."/>
            <person name="Korner R."/>
            <person name="Greff Z."/>
            <person name="Keri G."/>
            <person name="Stemmann O."/>
            <person name="Mann M."/>
        </authorList>
    </citation>
    <scope>PHOSPHORYLATION [LARGE SCALE ANALYSIS] AT SER-528 AND SER-531</scope>
    <scope>IDENTIFICATION BY MASS SPECTROMETRY [LARGE SCALE ANALYSIS]</scope>
    <source>
        <tissue>Cervix carcinoma</tissue>
    </source>
</reference>
<reference key="10">
    <citation type="journal article" date="2009" name="Anal. Chem.">
        <title>Lys-N and trypsin cover complementary parts of the phosphoproteome in a refined SCX-based approach.</title>
        <authorList>
            <person name="Gauci S."/>
            <person name="Helbig A.O."/>
            <person name="Slijper M."/>
            <person name="Krijgsveld J."/>
            <person name="Heck A.J."/>
            <person name="Mohammed S."/>
        </authorList>
    </citation>
    <scope>IDENTIFICATION BY MASS SPECTROMETRY [LARGE SCALE ANALYSIS]</scope>
</reference>
<reference key="11">
    <citation type="journal article" date="2009" name="Nat. Genet.">
        <title>Identification of a putative lysosomal cobalamin exporter altered in the cblF defect of vitamin B12 metabolism.</title>
        <authorList>
            <person name="Rutsch F."/>
            <person name="Gailus S."/>
            <person name="Miousse I.R."/>
            <person name="Suormala T."/>
            <person name="Sagne C."/>
            <person name="Toliat M.R."/>
            <person name="Nuernberg G."/>
            <person name="Wittkampf T."/>
            <person name="Buers I."/>
            <person name="Sharifi A."/>
            <person name="Stucki M."/>
            <person name="Becker C."/>
            <person name="Baumgartner M."/>
            <person name="Robenek H."/>
            <person name="Marquardt T."/>
            <person name="Hoehne W."/>
            <person name="Gasnier B."/>
            <person name="Rosenblatt D.S."/>
            <person name="Fowler B."/>
            <person name="Nuernberg P."/>
        </authorList>
    </citation>
    <scope>INVOLVEMENT IN MAHCF</scope>
    <scope>FUNCTION</scope>
    <scope>SUBCELLULAR LOCATION</scope>
    <scope>TOPOLOGY</scope>
    <scope>GLYCOSYLATION</scope>
    <scope>MUTAGENESIS OF ASN-78; ASN-88; ASN-448 AND ASN-457</scope>
</reference>
<reference key="12">
    <citation type="journal article" date="2010" name="Sci. Signal.">
        <title>Quantitative phosphoproteomics reveals widespread full phosphorylation site occupancy during mitosis.</title>
        <authorList>
            <person name="Olsen J.V."/>
            <person name="Vermeulen M."/>
            <person name="Santamaria A."/>
            <person name="Kumar C."/>
            <person name="Miller M.L."/>
            <person name="Jensen L.J."/>
            <person name="Gnad F."/>
            <person name="Cox J."/>
            <person name="Jensen T.S."/>
            <person name="Nigg E.A."/>
            <person name="Brunak S."/>
            <person name="Mann M."/>
        </authorList>
    </citation>
    <scope>PHOSPHORYLATION [LARGE SCALE ANALYSIS] AT SER-528 AND SER-531</scope>
    <scope>IDENTIFICATION BY MASS SPECTROMETRY [LARGE SCALE ANALYSIS]</scope>
    <source>
        <tissue>Cervix carcinoma</tissue>
    </source>
</reference>
<reference key="13">
    <citation type="journal article" date="2014" name="Mol. Membr. Biol.">
        <title>Purification and interaction analyses of two human lysosomal vitamin B12 transporters: LMBD1 and ABCD4.</title>
        <authorList>
            <person name="Deme J.C."/>
            <person name="Hancock M.A."/>
            <person name="Xia X."/>
            <person name="Shintre C.A."/>
            <person name="Plesa M."/>
            <person name="Kim J.C."/>
            <person name="Carpenter E.P."/>
            <person name="Rosenblatt D.S."/>
            <person name="Coulton J.W."/>
        </authorList>
    </citation>
    <scope>FUNCTION</scope>
    <scope>INTERACTION WITH ABCD4 AND MMACHC</scope>
</reference>
<reference key="14">
    <citation type="journal article" date="2016" name="Sci. Rep.">
        <title>Translocation of the ABC transporter ABCD4 from the endoplasmic reticulum to lysosomes requires the escort protein LMBD1.</title>
        <authorList>
            <person name="Kawaguchi K."/>
            <person name="Okamoto T."/>
            <person name="Morita M."/>
            <person name="Imanaka T."/>
        </authorList>
    </citation>
    <scope>FUNCTION</scope>
    <scope>INTERACTION WITH ABCD4</scope>
    <scope>SUBCELLULAR LOCATION</scope>
</reference>
<reference key="15">
    <citation type="journal article" date="2017" name="J. Biol. Chem.">
        <title>Clinical or ATPase domain mutations in ABCD4 disrupt the interaction between the vitamin B12-trafficking proteins ABCD4 and LMBD1.</title>
        <authorList>
            <person name="Fettelschoss V."/>
            <person name="Burda P."/>
            <person name="Sagne C."/>
            <person name="Coelho D."/>
            <person name="De Laet C."/>
            <person name="Lutz S."/>
            <person name="Suormala T."/>
            <person name="Fowler B."/>
            <person name="Pietrancosta N."/>
            <person name="Gasnier B."/>
            <person name="Bornhauser B."/>
            <person name="Froese D.S."/>
            <person name="Baumgartner M.R."/>
        </authorList>
    </citation>
    <scope>SUBCELLULAR LOCATION</scope>
    <scope>INTERACTION WITH ABCD4</scope>
</reference>
<reference key="16">
    <citation type="journal article" date="2021" name="J. Biol. Chem.">
        <title>The lysosomal protein ABCD4 can transport vitamin B12 across liposomal membranes in vitro.</title>
        <authorList>
            <person name="Kitai K."/>
            <person name="Kawaguchi K."/>
            <person name="Tomohiro T."/>
            <person name="Morita M."/>
            <person name="So T."/>
            <person name="Imanaka T."/>
        </authorList>
    </citation>
    <scope>INTERACTION WITH ABCD4</scope>
    <scope>SUBCELLULAR LOCATION</scope>
</reference>
<name>LMBD1_HUMAN</name>